<feature type="signal peptide" evidence="1">
    <location>
        <begin position="1"/>
        <end position="24"/>
    </location>
</feature>
<feature type="chain" id="PRO_0000365947" description="Draxin">
    <location>
        <begin position="25"/>
        <end position="337"/>
    </location>
</feature>
<feature type="region of interest" description="Disordered" evidence="2">
    <location>
        <begin position="36"/>
        <end position="67"/>
    </location>
</feature>
<feature type="region of interest" description="Disordered" evidence="2">
    <location>
        <begin position="107"/>
        <end position="133"/>
    </location>
</feature>
<feature type="region of interest" description="Disordered" evidence="2">
    <location>
        <begin position="234"/>
        <end position="261"/>
    </location>
</feature>
<feature type="compositionally biased region" description="Basic residues" evidence="2">
    <location>
        <begin position="122"/>
        <end position="133"/>
    </location>
</feature>
<feature type="compositionally biased region" description="Basic residues" evidence="2">
    <location>
        <begin position="237"/>
        <end position="246"/>
    </location>
</feature>
<feature type="glycosylation site" description="N-linked (GlcNAc...) asparagine" evidence="1">
    <location>
        <position position="252"/>
    </location>
</feature>
<organism>
    <name type="scientific">Bos taurus</name>
    <name type="common">Bovine</name>
    <dbReference type="NCBI Taxonomy" id="9913"/>
    <lineage>
        <taxon>Eukaryota</taxon>
        <taxon>Metazoa</taxon>
        <taxon>Chordata</taxon>
        <taxon>Craniata</taxon>
        <taxon>Vertebrata</taxon>
        <taxon>Euteleostomi</taxon>
        <taxon>Mammalia</taxon>
        <taxon>Eutheria</taxon>
        <taxon>Laurasiatheria</taxon>
        <taxon>Artiodactyla</taxon>
        <taxon>Ruminantia</taxon>
        <taxon>Pecora</taxon>
        <taxon>Bovidae</taxon>
        <taxon>Bovinae</taxon>
        <taxon>Bos</taxon>
    </lineage>
</organism>
<dbReference type="EMBL" id="AAFC03122053">
    <property type="status" value="NOT_ANNOTATED_CDS"/>
    <property type="molecule type" value="Genomic_DNA"/>
</dbReference>
<dbReference type="EMBL" id="AAFC03122054">
    <property type="status" value="NOT_ANNOTATED_CDS"/>
    <property type="molecule type" value="Genomic_DNA"/>
</dbReference>
<dbReference type="RefSeq" id="NP_001181941.1">
    <property type="nucleotide sequence ID" value="NM_001195012.1"/>
</dbReference>
<dbReference type="SMR" id="P0C8S2"/>
<dbReference type="FunCoup" id="P0C8S2">
    <property type="interactions" value="271"/>
</dbReference>
<dbReference type="STRING" id="9913.ENSBTAP00000019092"/>
<dbReference type="GlyCosmos" id="P0C8S2">
    <property type="glycosylation" value="1 site, No reported glycans"/>
</dbReference>
<dbReference type="GlyGen" id="P0C8S2">
    <property type="glycosylation" value="1 site"/>
</dbReference>
<dbReference type="PaxDb" id="9913-ENSBTAP00000019092"/>
<dbReference type="GeneID" id="506110"/>
<dbReference type="KEGG" id="bta:506110"/>
<dbReference type="CTD" id="374946"/>
<dbReference type="eggNOG" id="ENOG502QUE0">
    <property type="taxonomic scope" value="Eukaryota"/>
</dbReference>
<dbReference type="HOGENOM" id="CLU_063473_0_0_1"/>
<dbReference type="InParanoid" id="P0C8S2"/>
<dbReference type="OrthoDB" id="9931375at2759"/>
<dbReference type="TreeFam" id="TF333255"/>
<dbReference type="Proteomes" id="UP000009136">
    <property type="component" value="Unplaced"/>
</dbReference>
<dbReference type="GO" id="GO:0005576">
    <property type="term" value="C:extracellular region"/>
    <property type="evidence" value="ECO:0000250"/>
    <property type="project" value="UniProtKB"/>
</dbReference>
<dbReference type="GO" id="GO:0007411">
    <property type="term" value="P:axon guidance"/>
    <property type="evidence" value="ECO:0000250"/>
    <property type="project" value="UniProtKB"/>
</dbReference>
<dbReference type="GO" id="GO:0021528">
    <property type="term" value="P:commissural neuron differentiation in spinal cord"/>
    <property type="evidence" value="ECO:0000250"/>
    <property type="project" value="UniProtKB"/>
</dbReference>
<dbReference type="GO" id="GO:0021516">
    <property type="term" value="P:dorsal spinal cord development"/>
    <property type="evidence" value="ECO:0000250"/>
    <property type="project" value="UniProtKB"/>
</dbReference>
<dbReference type="GO" id="GO:0030900">
    <property type="term" value="P:forebrain development"/>
    <property type="evidence" value="ECO:0000250"/>
    <property type="project" value="UniProtKB"/>
</dbReference>
<dbReference type="GO" id="GO:0090090">
    <property type="term" value="P:negative regulation of canonical Wnt signaling pathway"/>
    <property type="evidence" value="ECO:0000250"/>
    <property type="project" value="UniProtKB"/>
</dbReference>
<dbReference type="GO" id="GO:0016055">
    <property type="term" value="P:Wnt signaling pathway"/>
    <property type="evidence" value="ECO:0007669"/>
    <property type="project" value="UniProtKB-KW"/>
</dbReference>
<dbReference type="HAMAP" id="MF_03060">
    <property type="entry name" value="Draxin"/>
    <property type="match status" value="1"/>
</dbReference>
<dbReference type="InterPro" id="IPR029094">
    <property type="entry name" value="Draxin"/>
</dbReference>
<dbReference type="PANTHER" id="PTHR28610">
    <property type="entry name" value="DRAXIN"/>
    <property type="match status" value="1"/>
</dbReference>
<dbReference type="PANTHER" id="PTHR28610:SF1">
    <property type="entry name" value="DRAXIN"/>
    <property type="match status" value="1"/>
</dbReference>
<dbReference type="Pfam" id="PF15550">
    <property type="entry name" value="Draxin"/>
    <property type="match status" value="1"/>
</dbReference>
<name>DRAXI_BOVIN</name>
<gene>
    <name evidence="1" type="primary">DRAXIN</name>
</gene>
<sequence>MLLLALLLLLELSLAGSLGPGSSAQNLPENHIDLSGPALWTPQASHHRRRGLGKKERGPGTPGWTQDGAVVTATRQASRLPGAEGLLHGSSPAGLLQDKGLLRGLTRPYPEKETQAPGSERVKKRGREHKRRKERLRLHRGRALVRGPSSLMKKAELSEDQSPDALMEESSTSLAPTILYLTTFEAPATEESLILPVTSLWPQAHPRPDGEVMPTLDMALFDWTDYEDLKPEVWPSTRKKEKHRGKLSSDGNETSPAKGEPCDHHQDCLPGTCCDLREHLCTPHNRGLNNKCFDDCMCVEGLRCYAKFHRNRRVTRRKGRCVEPETANGDQGSFINV</sequence>
<evidence type="ECO:0000255" key="1">
    <source>
        <dbReference type="HAMAP-Rule" id="MF_03060"/>
    </source>
</evidence>
<evidence type="ECO:0000256" key="2">
    <source>
        <dbReference type="SAM" id="MobiDB-lite"/>
    </source>
</evidence>
<comment type="function">
    <text evidence="1">Chemorepulsive axon guidance protein required for the development of spinal cord and forebrain commissures. Acts as a chemorepulsive guidance protein for commissural axons during development. Able to inhibit or repel neurite outgrowth from dorsal spinal cord. Inhibits the stabilization of cytosolic beta-catenin (CTNNB1) via its interaction with LRP6, thereby acting as an antagonist of Wnt signaling pathway.</text>
</comment>
<comment type="subunit">
    <text evidence="1">Interacts with LRP6.</text>
</comment>
<comment type="subcellular location">
    <subcellularLocation>
        <location evidence="1">Secreted</location>
    </subcellularLocation>
</comment>
<comment type="similarity">
    <text evidence="1">Belongs to the draxin family.</text>
</comment>
<reference key="1">
    <citation type="journal article" date="2009" name="Science">
        <title>The genome sequence of taurine cattle: a window to ruminant biology and evolution.</title>
        <authorList>
            <consortium name="The bovine genome sequencing and analysis consortium"/>
        </authorList>
    </citation>
    <scope>NUCLEOTIDE SEQUENCE [LARGE SCALE GENOMIC DNA]</scope>
    <source>
        <strain>Hereford</strain>
    </source>
</reference>
<keyword id="KW-0217">Developmental protein</keyword>
<keyword id="KW-0325">Glycoprotein</keyword>
<keyword id="KW-1185">Reference proteome</keyword>
<keyword id="KW-0964">Secreted</keyword>
<keyword id="KW-0732">Signal</keyword>
<keyword id="KW-0879">Wnt signaling pathway</keyword>
<protein>
    <recommendedName>
        <fullName evidence="1">Draxin</fullName>
    </recommendedName>
    <alternativeName>
        <fullName evidence="1">Dorsal inhibitory axon guidance protein</fullName>
    </alternativeName>
    <alternativeName>
        <fullName evidence="1">Dorsal repulsive axon guidance protein</fullName>
    </alternativeName>
</protein>
<accession>P0C8S2</accession>
<proteinExistence type="inferred from homology"/>